<name>MNMA_NOCSJ</name>
<feature type="chain" id="PRO_0000349722" description="tRNA-specific 2-thiouridylase MnmA">
    <location>
        <begin position="1"/>
        <end position="366"/>
    </location>
</feature>
<feature type="region of interest" description="Interaction with tRNA" evidence="1">
    <location>
        <begin position="148"/>
        <end position="150"/>
    </location>
</feature>
<feature type="active site" description="Nucleophile" evidence="1">
    <location>
        <position position="101"/>
    </location>
</feature>
<feature type="active site" description="Cysteine persulfide intermediate" evidence="1">
    <location>
        <position position="198"/>
    </location>
</feature>
<feature type="binding site" evidence="1">
    <location>
        <begin position="6"/>
        <end position="13"/>
    </location>
    <ligand>
        <name>ATP</name>
        <dbReference type="ChEBI" id="CHEBI:30616"/>
    </ligand>
</feature>
<feature type="binding site" evidence="1">
    <location>
        <position position="32"/>
    </location>
    <ligand>
        <name>ATP</name>
        <dbReference type="ChEBI" id="CHEBI:30616"/>
    </ligand>
</feature>
<feature type="binding site" evidence="1">
    <location>
        <position position="125"/>
    </location>
    <ligand>
        <name>ATP</name>
        <dbReference type="ChEBI" id="CHEBI:30616"/>
    </ligand>
</feature>
<feature type="site" description="Interaction with tRNA" evidence="1">
    <location>
        <position position="126"/>
    </location>
</feature>
<feature type="site" description="Interaction with tRNA" evidence="1">
    <location>
        <position position="341"/>
    </location>
</feature>
<feature type="disulfide bond" description="Alternate" evidence="1">
    <location>
        <begin position="101"/>
        <end position="198"/>
    </location>
</feature>
<reference key="1">
    <citation type="submission" date="2006-12" db="EMBL/GenBank/DDBJ databases">
        <title>Complete sequence of chromosome 1 of Nocardioides sp. JS614.</title>
        <authorList>
            <person name="Copeland A."/>
            <person name="Lucas S."/>
            <person name="Lapidus A."/>
            <person name="Barry K."/>
            <person name="Detter J.C."/>
            <person name="Glavina del Rio T."/>
            <person name="Hammon N."/>
            <person name="Israni S."/>
            <person name="Dalin E."/>
            <person name="Tice H."/>
            <person name="Pitluck S."/>
            <person name="Thompson L.S."/>
            <person name="Brettin T."/>
            <person name="Bruce D."/>
            <person name="Han C."/>
            <person name="Tapia R."/>
            <person name="Schmutz J."/>
            <person name="Larimer F."/>
            <person name="Land M."/>
            <person name="Hauser L."/>
            <person name="Kyrpides N."/>
            <person name="Kim E."/>
            <person name="Mattes T."/>
            <person name="Gossett J."/>
            <person name="Richardson P."/>
        </authorList>
    </citation>
    <scope>NUCLEOTIDE SEQUENCE [LARGE SCALE GENOMIC DNA]</scope>
    <source>
        <strain>ATCC BAA-499 / JS614</strain>
    </source>
</reference>
<sequence>MRVLAAMSGGVDSAVAAARAAEAGHDVTGIHLALSRNPQSYRSGARGCCTIEDSNDARRAADVIGIPFYVWDLSDRFHEDVVEDFMAEYAAGRTPNPCLRCNEKIKFAAVLDRALGLGFDAVATGHYARLVAGADGLVEMHRAVDHGKDQSYVLGVLDQGQLRHSLFPLGGSTKDEVRREAAERGLLVADKPDSHDICFIADGDNAGWLREKLGDRAPHHEGTIVDDDTGEVLGRHEGSYGFTIGQRKGLRIGRPAPDGRPRFVLDIEPVSGTVTVGPHERLAVHRLRGIRPRWCGTVPDRLSGTVQLRAHGEEHRAVLVRDGDEVDIELLEPAYGIAPGQAAVLYDGSRVVGSATISATDRVAAR</sequence>
<proteinExistence type="inferred from homology"/>
<accession>A1SMB0</accession>
<keyword id="KW-0067">ATP-binding</keyword>
<keyword id="KW-0963">Cytoplasm</keyword>
<keyword id="KW-1015">Disulfide bond</keyword>
<keyword id="KW-0547">Nucleotide-binding</keyword>
<keyword id="KW-1185">Reference proteome</keyword>
<keyword id="KW-0694">RNA-binding</keyword>
<keyword id="KW-0808">Transferase</keyword>
<keyword id="KW-0819">tRNA processing</keyword>
<keyword id="KW-0820">tRNA-binding</keyword>
<dbReference type="EC" id="2.8.1.13" evidence="1"/>
<dbReference type="EMBL" id="CP000509">
    <property type="protein sequence ID" value="ABL82945.1"/>
    <property type="molecule type" value="Genomic_DNA"/>
</dbReference>
<dbReference type="RefSeq" id="WP_011756878.1">
    <property type="nucleotide sequence ID" value="NC_008699.1"/>
</dbReference>
<dbReference type="SMR" id="A1SMB0"/>
<dbReference type="STRING" id="196162.Noca_3445"/>
<dbReference type="KEGG" id="nca:Noca_3445"/>
<dbReference type="eggNOG" id="COG0482">
    <property type="taxonomic scope" value="Bacteria"/>
</dbReference>
<dbReference type="HOGENOM" id="CLU_035188_0_2_11"/>
<dbReference type="OrthoDB" id="9800696at2"/>
<dbReference type="Proteomes" id="UP000000640">
    <property type="component" value="Chromosome"/>
</dbReference>
<dbReference type="GO" id="GO:0005737">
    <property type="term" value="C:cytoplasm"/>
    <property type="evidence" value="ECO:0007669"/>
    <property type="project" value="UniProtKB-SubCell"/>
</dbReference>
<dbReference type="GO" id="GO:0005524">
    <property type="term" value="F:ATP binding"/>
    <property type="evidence" value="ECO:0007669"/>
    <property type="project" value="UniProtKB-KW"/>
</dbReference>
<dbReference type="GO" id="GO:0000049">
    <property type="term" value="F:tRNA binding"/>
    <property type="evidence" value="ECO:0007669"/>
    <property type="project" value="UniProtKB-KW"/>
</dbReference>
<dbReference type="GO" id="GO:0103016">
    <property type="term" value="F:tRNA-uridine 2-sulfurtransferase activity"/>
    <property type="evidence" value="ECO:0007669"/>
    <property type="project" value="UniProtKB-EC"/>
</dbReference>
<dbReference type="GO" id="GO:0002143">
    <property type="term" value="P:tRNA wobble position uridine thiolation"/>
    <property type="evidence" value="ECO:0007669"/>
    <property type="project" value="TreeGrafter"/>
</dbReference>
<dbReference type="CDD" id="cd01998">
    <property type="entry name" value="MnmA_TRMU-like"/>
    <property type="match status" value="1"/>
</dbReference>
<dbReference type="FunFam" id="3.40.50.620:FF:000057">
    <property type="entry name" value="tRNA-specific 2-thiouridylase MnmA"/>
    <property type="match status" value="1"/>
</dbReference>
<dbReference type="Gene3D" id="2.30.30.280">
    <property type="entry name" value="Adenine nucleotide alpha hydrolases-like domains"/>
    <property type="match status" value="1"/>
</dbReference>
<dbReference type="Gene3D" id="3.40.50.620">
    <property type="entry name" value="HUPs"/>
    <property type="match status" value="1"/>
</dbReference>
<dbReference type="Gene3D" id="2.40.30.10">
    <property type="entry name" value="Translation factors"/>
    <property type="match status" value="1"/>
</dbReference>
<dbReference type="HAMAP" id="MF_00144">
    <property type="entry name" value="tRNA_thiouridyl_MnmA"/>
    <property type="match status" value="1"/>
</dbReference>
<dbReference type="InterPro" id="IPR004506">
    <property type="entry name" value="MnmA-like"/>
</dbReference>
<dbReference type="InterPro" id="IPR046885">
    <property type="entry name" value="MnmA-like_C"/>
</dbReference>
<dbReference type="InterPro" id="IPR046884">
    <property type="entry name" value="MnmA-like_central"/>
</dbReference>
<dbReference type="InterPro" id="IPR023382">
    <property type="entry name" value="MnmA-like_central_sf"/>
</dbReference>
<dbReference type="InterPro" id="IPR014729">
    <property type="entry name" value="Rossmann-like_a/b/a_fold"/>
</dbReference>
<dbReference type="NCBIfam" id="NF001138">
    <property type="entry name" value="PRK00143.1"/>
    <property type="match status" value="1"/>
</dbReference>
<dbReference type="NCBIfam" id="TIGR00420">
    <property type="entry name" value="trmU"/>
    <property type="match status" value="1"/>
</dbReference>
<dbReference type="PANTHER" id="PTHR11933:SF5">
    <property type="entry name" value="MITOCHONDRIAL TRNA-SPECIFIC 2-THIOURIDYLASE 1"/>
    <property type="match status" value="1"/>
</dbReference>
<dbReference type="PANTHER" id="PTHR11933">
    <property type="entry name" value="TRNA 5-METHYLAMINOMETHYL-2-THIOURIDYLATE -METHYLTRANSFERASE"/>
    <property type="match status" value="1"/>
</dbReference>
<dbReference type="Pfam" id="PF03054">
    <property type="entry name" value="tRNA_Me_trans"/>
    <property type="match status" value="1"/>
</dbReference>
<dbReference type="Pfam" id="PF20258">
    <property type="entry name" value="tRNA_Me_trans_C"/>
    <property type="match status" value="1"/>
</dbReference>
<dbReference type="Pfam" id="PF20259">
    <property type="entry name" value="tRNA_Me_trans_M"/>
    <property type="match status" value="1"/>
</dbReference>
<dbReference type="SUPFAM" id="SSF52402">
    <property type="entry name" value="Adenine nucleotide alpha hydrolases-like"/>
    <property type="match status" value="1"/>
</dbReference>
<evidence type="ECO:0000255" key="1">
    <source>
        <dbReference type="HAMAP-Rule" id="MF_00144"/>
    </source>
</evidence>
<organism>
    <name type="scientific">Nocardioides sp. (strain ATCC BAA-499 / JS614)</name>
    <dbReference type="NCBI Taxonomy" id="196162"/>
    <lineage>
        <taxon>Bacteria</taxon>
        <taxon>Bacillati</taxon>
        <taxon>Actinomycetota</taxon>
        <taxon>Actinomycetes</taxon>
        <taxon>Propionibacteriales</taxon>
        <taxon>Nocardioidaceae</taxon>
        <taxon>Nocardioides</taxon>
    </lineage>
</organism>
<protein>
    <recommendedName>
        <fullName evidence="1">tRNA-specific 2-thiouridylase MnmA</fullName>
        <ecNumber evidence="1">2.8.1.13</ecNumber>
    </recommendedName>
</protein>
<gene>
    <name evidence="1" type="primary">mnmA</name>
    <name type="ordered locus">Noca_3445</name>
</gene>
<comment type="function">
    <text evidence="1">Catalyzes the 2-thiolation of uridine at the wobble position (U34) of tRNA, leading to the formation of s(2)U34.</text>
</comment>
<comment type="catalytic activity">
    <reaction evidence="1">
        <text>S-sulfanyl-L-cysteinyl-[protein] + uridine(34) in tRNA + AH2 + ATP = 2-thiouridine(34) in tRNA + L-cysteinyl-[protein] + A + AMP + diphosphate + H(+)</text>
        <dbReference type="Rhea" id="RHEA:47032"/>
        <dbReference type="Rhea" id="RHEA-COMP:10131"/>
        <dbReference type="Rhea" id="RHEA-COMP:11726"/>
        <dbReference type="Rhea" id="RHEA-COMP:11727"/>
        <dbReference type="Rhea" id="RHEA-COMP:11728"/>
        <dbReference type="ChEBI" id="CHEBI:13193"/>
        <dbReference type="ChEBI" id="CHEBI:15378"/>
        <dbReference type="ChEBI" id="CHEBI:17499"/>
        <dbReference type="ChEBI" id="CHEBI:29950"/>
        <dbReference type="ChEBI" id="CHEBI:30616"/>
        <dbReference type="ChEBI" id="CHEBI:33019"/>
        <dbReference type="ChEBI" id="CHEBI:61963"/>
        <dbReference type="ChEBI" id="CHEBI:65315"/>
        <dbReference type="ChEBI" id="CHEBI:87170"/>
        <dbReference type="ChEBI" id="CHEBI:456215"/>
        <dbReference type="EC" id="2.8.1.13"/>
    </reaction>
</comment>
<comment type="subcellular location">
    <subcellularLocation>
        <location evidence="1">Cytoplasm</location>
    </subcellularLocation>
</comment>
<comment type="similarity">
    <text evidence="1">Belongs to the MnmA/TRMU family.</text>
</comment>